<reference key="1">
    <citation type="journal article" date="2009" name="PLoS ONE">
        <title>The complete genome of Teredinibacter turnerae T7901: an intracellular endosymbiont of marine wood-boring bivalves (shipworms).</title>
        <authorList>
            <person name="Yang J.C."/>
            <person name="Madupu R."/>
            <person name="Durkin A.S."/>
            <person name="Ekborg N.A."/>
            <person name="Pedamallu C.S."/>
            <person name="Hostetler J.B."/>
            <person name="Radune D."/>
            <person name="Toms B.S."/>
            <person name="Henrissat B."/>
            <person name="Coutinho P.M."/>
            <person name="Schwarz S."/>
            <person name="Field L."/>
            <person name="Trindade-Silva A.E."/>
            <person name="Soares C.A.G."/>
            <person name="Elshahawi S."/>
            <person name="Hanora A."/>
            <person name="Schmidt E.W."/>
            <person name="Haygood M.G."/>
            <person name="Posfai J."/>
            <person name="Benner J."/>
            <person name="Madinger C."/>
            <person name="Nove J."/>
            <person name="Anton B."/>
            <person name="Chaudhary K."/>
            <person name="Foster J."/>
            <person name="Holman A."/>
            <person name="Kumar S."/>
            <person name="Lessard P.A."/>
            <person name="Luyten Y.A."/>
            <person name="Slatko B."/>
            <person name="Wood N."/>
            <person name="Wu B."/>
            <person name="Teplitski M."/>
            <person name="Mougous J.D."/>
            <person name="Ward N."/>
            <person name="Eisen J.A."/>
            <person name="Badger J.H."/>
            <person name="Distel D.L."/>
        </authorList>
    </citation>
    <scope>NUCLEOTIDE SEQUENCE [LARGE SCALE GENOMIC DNA]</scope>
    <source>
        <strain>ATCC 39867 / T7901</strain>
    </source>
</reference>
<sequence>MTIGIVGRKSGMTRIFTDDGLSVPVTVIEVDPNRITQVKSVETDGYAAVQVTVGSRRASRVTKAEAGHFAKAQTEAGRGVWELRNEAGEAFEVGGQLTVEAFEAGQKVDVTGTSKGKGFAGTVKRWNFRTQDATHGNSLSHRAPGSIGQCQTPGRVMKGKKMSGHMGAERVTTQNLEVVRVDVERNLLLIKGAVPGAPGGDVFIRPAVKLRNNG</sequence>
<evidence type="ECO:0000255" key="1">
    <source>
        <dbReference type="HAMAP-Rule" id="MF_01325"/>
    </source>
</evidence>
<evidence type="ECO:0000256" key="2">
    <source>
        <dbReference type="SAM" id="MobiDB-lite"/>
    </source>
</evidence>
<evidence type="ECO:0000305" key="3"/>
<accession>C5BQ61</accession>
<proteinExistence type="inferred from homology"/>
<protein>
    <recommendedName>
        <fullName evidence="1">Large ribosomal subunit protein uL3</fullName>
    </recommendedName>
    <alternativeName>
        <fullName evidence="3">50S ribosomal protein L3</fullName>
    </alternativeName>
</protein>
<organism>
    <name type="scientific">Teredinibacter turnerae (strain ATCC 39867 / T7901)</name>
    <dbReference type="NCBI Taxonomy" id="377629"/>
    <lineage>
        <taxon>Bacteria</taxon>
        <taxon>Pseudomonadati</taxon>
        <taxon>Pseudomonadota</taxon>
        <taxon>Gammaproteobacteria</taxon>
        <taxon>Cellvibrionales</taxon>
        <taxon>Cellvibrionaceae</taxon>
        <taxon>Teredinibacter</taxon>
    </lineage>
</organism>
<keyword id="KW-0488">Methylation</keyword>
<keyword id="KW-1185">Reference proteome</keyword>
<keyword id="KW-0687">Ribonucleoprotein</keyword>
<keyword id="KW-0689">Ribosomal protein</keyword>
<keyword id="KW-0694">RNA-binding</keyword>
<keyword id="KW-0699">rRNA-binding</keyword>
<dbReference type="EMBL" id="CP001614">
    <property type="protein sequence ID" value="ACR10765.1"/>
    <property type="molecule type" value="Genomic_DNA"/>
</dbReference>
<dbReference type="RefSeq" id="WP_015816877.1">
    <property type="nucleotide sequence ID" value="NC_012997.1"/>
</dbReference>
<dbReference type="SMR" id="C5BQ61"/>
<dbReference type="STRING" id="377629.TERTU_0908"/>
<dbReference type="KEGG" id="ttu:TERTU_0908"/>
<dbReference type="eggNOG" id="COG0087">
    <property type="taxonomic scope" value="Bacteria"/>
</dbReference>
<dbReference type="HOGENOM" id="CLU_044142_4_1_6"/>
<dbReference type="OrthoDB" id="9806135at2"/>
<dbReference type="Proteomes" id="UP000009080">
    <property type="component" value="Chromosome"/>
</dbReference>
<dbReference type="GO" id="GO:0022625">
    <property type="term" value="C:cytosolic large ribosomal subunit"/>
    <property type="evidence" value="ECO:0007669"/>
    <property type="project" value="TreeGrafter"/>
</dbReference>
<dbReference type="GO" id="GO:0019843">
    <property type="term" value="F:rRNA binding"/>
    <property type="evidence" value="ECO:0007669"/>
    <property type="project" value="UniProtKB-UniRule"/>
</dbReference>
<dbReference type="GO" id="GO:0003735">
    <property type="term" value="F:structural constituent of ribosome"/>
    <property type="evidence" value="ECO:0007669"/>
    <property type="project" value="InterPro"/>
</dbReference>
<dbReference type="GO" id="GO:0006412">
    <property type="term" value="P:translation"/>
    <property type="evidence" value="ECO:0007669"/>
    <property type="project" value="UniProtKB-UniRule"/>
</dbReference>
<dbReference type="FunFam" id="2.40.30.10:FF:000004">
    <property type="entry name" value="50S ribosomal protein L3"/>
    <property type="match status" value="1"/>
</dbReference>
<dbReference type="FunFam" id="3.30.160.810:FF:000001">
    <property type="entry name" value="50S ribosomal protein L3"/>
    <property type="match status" value="1"/>
</dbReference>
<dbReference type="Gene3D" id="3.30.160.810">
    <property type="match status" value="1"/>
</dbReference>
<dbReference type="Gene3D" id="2.40.30.10">
    <property type="entry name" value="Translation factors"/>
    <property type="match status" value="1"/>
</dbReference>
<dbReference type="HAMAP" id="MF_01325_B">
    <property type="entry name" value="Ribosomal_uL3_B"/>
    <property type="match status" value="1"/>
</dbReference>
<dbReference type="InterPro" id="IPR000597">
    <property type="entry name" value="Ribosomal_uL3"/>
</dbReference>
<dbReference type="InterPro" id="IPR019927">
    <property type="entry name" value="Ribosomal_uL3_bac/org-type"/>
</dbReference>
<dbReference type="InterPro" id="IPR019926">
    <property type="entry name" value="Ribosomal_uL3_CS"/>
</dbReference>
<dbReference type="InterPro" id="IPR009000">
    <property type="entry name" value="Transl_B-barrel_sf"/>
</dbReference>
<dbReference type="NCBIfam" id="TIGR03625">
    <property type="entry name" value="L3_bact"/>
    <property type="match status" value="1"/>
</dbReference>
<dbReference type="PANTHER" id="PTHR11229">
    <property type="entry name" value="50S RIBOSOMAL PROTEIN L3"/>
    <property type="match status" value="1"/>
</dbReference>
<dbReference type="PANTHER" id="PTHR11229:SF16">
    <property type="entry name" value="LARGE RIBOSOMAL SUBUNIT PROTEIN UL3C"/>
    <property type="match status" value="1"/>
</dbReference>
<dbReference type="Pfam" id="PF00297">
    <property type="entry name" value="Ribosomal_L3"/>
    <property type="match status" value="1"/>
</dbReference>
<dbReference type="SUPFAM" id="SSF50447">
    <property type="entry name" value="Translation proteins"/>
    <property type="match status" value="1"/>
</dbReference>
<dbReference type="PROSITE" id="PS00474">
    <property type="entry name" value="RIBOSOMAL_L3"/>
    <property type="match status" value="1"/>
</dbReference>
<name>RL3_TERTT</name>
<gene>
    <name evidence="1" type="primary">rplC</name>
    <name type="ordered locus">TERTU_0908</name>
</gene>
<comment type="function">
    <text evidence="1">One of the primary rRNA binding proteins, it binds directly near the 3'-end of the 23S rRNA, where it nucleates assembly of the 50S subunit.</text>
</comment>
<comment type="subunit">
    <text evidence="1">Part of the 50S ribosomal subunit. Forms a cluster with proteins L14 and L19.</text>
</comment>
<comment type="PTM">
    <text evidence="1">Methylated by PrmB.</text>
</comment>
<comment type="similarity">
    <text evidence="1">Belongs to the universal ribosomal protein uL3 family.</text>
</comment>
<feature type="chain" id="PRO_1000214527" description="Large ribosomal subunit protein uL3">
    <location>
        <begin position="1"/>
        <end position="214"/>
    </location>
</feature>
<feature type="region of interest" description="Disordered" evidence="2">
    <location>
        <begin position="134"/>
        <end position="161"/>
    </location>
</feature>
<feature type="modified residue" description="N5-methylglutamine" evidence="1">
    <location>
        <position position="151"/>
    </location>
</feature>